<protein>
    <recommendedName>
        <fullName evidence="1">HMP-PP phosphatase</fullName>
        <ecNumber evidence="1">3.6.1.-</ecNumber>
    </recommendedName>
</protein>
<keyword id="KW-0378">Hydrolase</keyword>
<keyword id="KW-0460">Magnesium</keyword>
<keyword id="KW-0479">Metal-binding</keyword>
<comment type="function">
    <text evidence="1">Catalyzes the hydrolysis of 4-amino-2-methyl-5-hydroxymethylpyrimidine pyrophosphate (HMP-PP) to 4-amino-2-methyl-5-hydroxymethylpyrimidine phosphate (HMP-P).</text>
</comment>
<comment type="catalytic activity">
    <reaction evidence="1">
        <text>4-amino-2-methyl-5-(diphosphooxymethyl)pyrimidine + H2O = 4-amino-2-methyl-5-(phosphooxymethyl)pyrimidine + phosphate + H(+)</text>
        <dbReference type="Rhea" id="RHEA:27914"/>
        <dbReference type="ChEBI" id="CHEBI:15377"/>
        <dbReference type="ChEBI" id="CHEBI:15378"/>
        <dbReference type="ChEBI" id="CHEBI:43474"/>
        <dbReference type="ChEBI" id="CHEBI:57841"/>
        <dbReference type="ChEBI" id="CHEBI:58354"/>
    </reaction>
</comment>
<comment type="cofactor">
    <cofactor evidence="1">
        <name>Mg(2+)</name>
        <dbReference type="ChEBI" id="CHEBI:18420"/>
    </cofactor>
</comment>
<comment type="similarity">
    <text evidence="1">Belongs to the HAD-like hydrolase superfamily. Cof family.</text>
</comment>
<dbReference type="EC" id="3.6.1.-" evidence="1"/>
<dbReference type="EMBL" id="CP000308">
    <property type="protein sequence ID" value="ABG14605.1"/>
    <property type="molecule type" value="Genomic_DNA"/>
</dbReference>
<dbReference type="RefSeq" id="WP_002208632.1">
    <property type="nucleotide sequence ID" value="NZ_CP009906.1"/>
</dbReference>
<dbReference type="SMR" id="Q1C4L7"/>
<dbReference type="GeneID" id="57975563"/>
<dbReference type="KEGG" id="ypa:YPA_2643"/>
<dbReference type="Proteomes" id="UP000001971">
    <property type="component" value="Chromosome"/>
</dbReference>
<dbReference type="GO" id="GO:0002145">
    <property type="term" value="F:4-amino-5-hydroxymethyl-2-methylpyrimidine diphosphatase activity"/>
    <property type="evidence" value="ECO:0007669"/>
    <property type="project" value="RHEA"/>
</dbReference>
<dbReference type="GO" id="GO:0000287">
    <property type="term" value="F:magnesium ion binding"/>
    <property type="evidence" value="ECO:0000250"/>
    <property type="project" value="UniProtKB"/>
</dbReference>
<dbReference type="GO" id="GO:0016791">
    <property type="term" value="F:phosphatase activity"/>
    <property type="evidence" value="ECO:0000250"/>
    <property type="project" value="UniProtKB"/>
</dbReference>
<dbReference type="CDD" id="cd07516">
    <property type="entry name" value="HAD_Pase"/>
    <property type="match status" value="1"/>
</dbReference>
<dbReference type="FunFam" id="3.30.1240.10:FF:000018">
    <property type="entry name" value="HMP-PP phosphatase"/>
    <property type="match status" value="1"/>
</dbReference>
<dbReference type="Gene3D" id="3.30.1240.10">
    <property type="match status" value="1"/>
</dbReference>
<dbReference type="Gene3D" id="3.40.50.1000">
    <property type="entry name" value="HAD superfamily/HAD-like"/>
    <property type="match status" value="1"/>
</dbReference>
<dbReference type="HAMAP" id="MF_01847">
    <property type="entry name" value="HMP_PP_phosphat"/>
    <property type="match status" value="1"/>
</dbReference>
<dbReference type="InterPro" id="IPR000150">
    <property type="entry name" value="Cof"/>
</dbReference>
<dbReference type="InterPro" id="IPR036412">
    <property type="entry name" value="HAD-like_sf"/>
</dbReference>
<dbReference type="InterPro" id="IPR006379">
    <property type="entry name" value="HAD-SF_hydro_IIB"/>
</dbReference>
<dbReference type="InterPro" id="IPR023214">
    <property type="entry name" value="HAD_sf"/>
</dbReference>
<dbReference type="InterPro" id="IPR023938">
    <property type="entry name" value="HMP-PP_phosphatase"/>
</dbReference>
<dbReference type="NCBIfam" id="TIGR00099">
    <property type="entry name" value="Cof-subfamily"/>
    <property type="match status" value="1"/>
</dbReference>
<dbReference type="NCBIfam" id="TIGR01484">
    <property type="entry name" value="HAD-SF-IIB"/>
    <property type="match status" value="1"/>
</dbReference>
<dbReference type="NCBIfam" id="NF011705">
    <property type="entry name" value="PRK15126.1"/>
    <property type="match status" value="1"/>
</dbReference>
<dbReference type="PANTHER" id="PTHR47267">
    <property type="match status" value="1"/>
</dbReference>
<dbReference type="PANTHER" id="PTHR47267:SF2">
    <property type="entry name" value="HMP-PP PHOSPHATASE"/>
    <property type="match status" value="1"/>
</dbReference>
<dbReference type="Pfam" id="PF08282">
    <property type="entry name" value="Hydrolase_3"/>
    <property type="match status" value="1"/>
</dbReference>
<dbReference type="SFLD" id="SFLDG01140">
    <property type="entry name" value="C2.B:_Phosphomannomutase_and_P"/>
    <property type="match status" value="1"/>
</dbReference>
<dbReference type="SFLD" id="SFLDS00003">
    <property type="entry name" value="Haloacid_Dehalogenase"/>
    <property type="match status" value="1"/>
</dbReference>
<dbReference type="SUPFAM" id="SSF56784">
    <property type="entry name" value="HAD-like"/>
    <property type="match status" value="1"/>
</dbReference>
<dbReference type="PROSITE" id="PS01228">
    <property type="entry name" value="COF_1"/>
    <property type="match status" value="1"/>
</dbReference>
<dbReference type="PROSITE" id="PS01229">
    <property type="entry name" value="COF_2"/>
    <property type="match status" value="1"/>
</dbReference>
<gene>
    <name evidence="1" type="primary">cof</name>
    <name type="ordered locus">YPA_2643</name>
</gene>
<name>COF_YERPA</name>
<accession>Q1C4L7</accession>
<reference key="1">
    <citation type="journal article" date="2006" name="J. Bacteriol.">
        <title>Complete genome sequence of Yersinia pestis strains Antiqua and Nepal516: evidence of gene reduction in an emerging pathogen.</title>
        <authorList>
            <person name="Chain P.S.G."/>
            <person name="Hu P."/>
            <person name="Malfatti S.A."/>
            <person name="Radnedge L."/>
            <person name="Larimer F."/>
            <person name="Vergez L.M."/>
            <person name="Worsham P."/>
            <person name="Chu M.C."/>
            <person name="Andersen G.L."/>
        </authorList>
    </citation>
    <scope>NUCLEOTIDE SEQUENCE [LARGE SCALE GENOMIC DNA]</scope>
    <source>
        <strain>Antiqua</strain>
    </source>
</reference>
<sequence>MYRLAAFDMDGTLLMRDHKIGSITLNALHQLADAGVTLTFATGRHYLDMKGILSHSGLNGYLITGNGTRVCDAEGNPLYGMDLPAELVEFVLRTPWQTNASIHLFRDDGWFTDRNDPDLLIAHTTSGFHFQLTEWDELPLTGNHKFCFIASHQELVELKAQLEQQMGGEADFCFSATDCLEVLPRGCNKGVALEKLSHHLDLTLADCMAFGDAMNDKEMLSRVGRGLVMGNALPQLKQELPQLQIIGRCEQQGVAHYLHHWLSSPHLTYSPEF</sequence>
<feature type="chain" id="PRO_0000343003" description="HMP-PP phosphatase">
    <location>
        <begin position="1"/>
        <end position="273"/>
    </location>
</feature>
<feature type="active site" description="Nucleophile" evidence="1">
    <location>
        <position position="8"/>
    </location>
</feature>
<feature type="binding site" evidence="1">
    <location>
        <position position="8"/>
    </location>
    <ligand>
        <name>Mg(2+)</name>
        <dbReference type="ChEBI" id="CHEBI:18420"/>
    </ligand>
</feature>
<feature type="binding site" evidence="1">
    <location>
        <position position="10"/>
    </location>
    <ligand>
        <name>Mg(2+)</name>
        <dbReference type="ChEBI" id="CHEBI:18420"/>
    </ligand>
</feature>
<feature type="binding site" evidence="1">
    <location>
        <position position="212"/>
    </location>
    <ligand>
        <name>Mg(2+)</name>
        <dbReference type="ChEBI" id="CHEBI:18420"/>
    </ligand>
</feature>
<evidence type="ECO:0000255" key="1">
    <source>
        <dbReference type="HAMAP-Rule" id="MF_01847"/>
    </source>
</evidence>
<organism>
    <name type="scientific">Yersinia pestis bv. Antiqua (strain Antiqua)</name>
    <dbReference type="NCBI Taxonomy" id="360102"/>
    <lineage>
        <taxon>Bacteria</taxon>
        <taxon>Pseudomonadati</taxon>
        <taxon>Pseudomonadota</taxon>
        <taxon>Gammaproteobacteria</taxon>
        <taxon>Enterobacterales</taxon>
        <taxon>Yersiniaceae</taxon>
        <taxon>Yersinia</taxon>
    </lineage>
</organism>
<proteinExistence type="inferred from homology"/>